<proteinExistence type="evidence at transcript level"/>
<evidence type="ECO:0000255" key="1">
    <source>
        <dbReference type="PROSITE-ProRule" id="PRU00326"/>
    </source>
</evidence>
<evidence type="ECO:0000256" key="2">
    <source>
        <dbReference type="SAM" id="MobiDB-lite"/>
    </source>
</evidence>
<evidence type="ECO:0000305" key="3"/>
<accession>Q7XLP4</accession>
<accession>Q0JDP9</accession>
<dbReference type="EMBL" id="AL731601">
    <property type="protein sequence ID" value="CAE05025.2"/>
    <property type="status" value="ALT_INIT"/>
    <property type="molecule type" value="Genomic_DNA"/>
</dbReference>
<dbReference type="EMBL" id="AP008210">
    <property type="protein sequence ID" value="BAF14538.1"/>
    <property type="status" value="ALT_INIT"/>
    <property type="molecule type" value="Genomic_DNA"/>
</dbReference>
<dbReference type="EMBL" id="AP014960">
    <property type="status" value="NOT_ANNOTATED_CDS"/>
    <property type="molecule type" value="Genomic_DNA"/>
</dbReference>
<dbReference type="EMBL" id="AK119999">
    <property type="status" value="NOT_ANNOTATED_CDS"/>
    <property type="molecule type" value="mRNA"/>
</dbReference>
<dbReference type="RefSeq" id="XP_015635251.1">
    <property type="nucleotide sequence ID" value="XM_015779765.1"/>
</dbReference>
<dbReference type="SMR" id="Q7XLP4"/>
<dbReference type="FunCoup" id="Q7XLP4">
    <property type="interactions" value="451"/>
</dbReference>
<dbReference type="PaxDb" id="39947-Q7XLP4"/>
<dbReference type="KEGG" id="dosa:Os04g0386900"/>
<dbReference type="eggNOG" id="ENOG502S4NC">
    <property type="taxonomic scope" value="Eukaryota"/>
</dbReference>
<dbReference type="HOGENOM" id="CLU_100768_0_0_1"/>
<dbReference type="InParanoid" id="Q7XLP4"/>
<dbReference type="OrthoDB" id="638806at2759"/>
<dbReference type="Proteomes" id="UP000000763">
    <property type="component" value="Chromosome 4"/>
</dbReference>
<dbReference type="Proteomes" id="UP000059680">
    <property type="component" value="Chromosome 4"/>
</dbReference>
<dbReference type="GO" id="GO:0005634">
    <property type="term" value="C:nucleus"/>
    <property type="evidence" value="ECO:0007669"/>
    <property type="project" value="UniProtKB-SubCell"/>
</dbReference>
<dbReference type="GO" id="GO:0003677">
    <property type="term" value="F:DNA binding"/>
    <property type="evidence" value="ECO:0007669"/>
    <property type="project" value="UniProtKB-KW"/>
</dbReference>
<dbReference type="CDD" id="cd10017">
    <property type="entry name" value="B3_DNA"/>
    <property type="match status" value="1"/>
</dbReference>
<dbReference type="Gene3D" id="2.40.330.10">
    <property type="entry name" value="DNA-binding pseudobarrel domain"/>
    <property type="match status" value="1"/>
</dbReference>
<dbReference type="InterPro" id="IPR003340">
    <property type="entry name" value="B3_DNA-bd"/>
</dbReference>
<dbReference type="InterPro" id="IPR015300">
    <property type="entry name" value="DNA-bd_pseudobarrel_sf"/>
</dbReference>
<dbReference type="InterPro" id="IPR044837">
    <property type="entry name" value="REM16-like"/>
</dbReference>
<dbReference type="PANTHER" id="PTHR31391:SF134">
    <property type="entry name" value="B3 DOMAIN-CONTAINING PROTEIN OS04G0386900"/>
    <property type="match status" value="1"/>
</dbReference>
<dbReference type="PANTHER" id="PTHR31391">
    <property type="entry name" value="B3 DOMAIN-CONTAINING PROTEIN OS11G0197600-RELATED"/>
    <property type="match status" value="1"/>
</dbReference>
<dbReference type="Pfam" id="PF02362">
    <property type="entry name" value="B3"/>
    <property type="match status" value="1"/>
</dbReference>
<dbReference type="SUPFAM" id="SSF101936">
    <property type="entry name" value="DNA-binding pseudobarrel domain"/>
    <property type="match status" value="1"/>
</dbReference>
<dbReference type="PROSITE" id="PS50863">
    <property type="entry name" value="B3"/>
    <property type="match status" value="1"/>
</dbReference>
<reference key="1">
    <citation type="journal article" date="2002" name="Nature">
        <title>Sequence and analysis of rice chromosome 4.</title>
        <authorList>
            <person name="Feng Q."/>
            <person name="Zhang Y."/>
            <person name="Hao P."/>
            <person name="Wang S."/>
            <person name="Fu G."/>
            <person name="Huang Y."/>
            <person name="Li Y."/>
            <person name="Zhu J."/>
            <person name="Liu Y."/>
            <person name="Hu X."/>
            <person name="Jia P."/>
            <person name="Zhang Y."/>
            <person name="Zhao Q."/>
            <person name="Ying K."/>
            <person name="Yu S."/>
            <person name="Tang Y."/>
            <person name="Weng Q."/>
            <person name="Zhang L."/>
            <person name="Lu Y."/>
            <person name="Mu J."/>
            <person name="Lu Y."/>
            <person name="Zhang L.S."/>
            <person name="Yu Z."/>
            <person name="Fan D."/>
            <person name="Liu X."/>
            <person name="Lu T."/>
            <person name="Li C."/>
            <person name="Wu Y."/>
            <person name="Sun T."/>
            <person name="Lei H."/>
            <person name="Li T."/>
            <person name="Hu H."/>
            <person name="Guan J."/>
            <person name="Wu M."/>
            <person name="Zhang R."/>
            <person name="Zhou B."/>
            <person name="Chen Z."/>
            <person name="Chen L."/>
            <person name="Jin Z."/>
            <person name="Wang R."/>
            <person name="Yin H."/>
            <person name="Cai Z."/>
            <person name="Ren S."/>
            <person name="Lv G."/>
            <person name="Gu W."/>
            <person name="Zhu G."/>
            <person name="Tu Y."/>
            <person name="Jia J."/>
            <person name="Zhang Y."/>
            <person name="Chen J."/>
            <person name="Kang H."/>
            <person name="Chen X."/>
            <person name="Shao C."/>
            <person name="Sun Y."/>
            <person name="Hu Q."/>
            <person name="Zhang X."/>
            <person name="Zhang W."/>
            <person name="Wang L."/>
            <person name="Ding C."/>
            <person name="Sheng H."/>
            <person name="Gu J."/>
            <person name="Chen S."/>
            <person name="Ni L."/>
            <person name="Zhu F."/>
            <person name="Chen W."/>
            <person name="Lan L."/>
            <person name="Lai Y."/>
            <person name="Cheng Z."/>
            <person name="Gu M."/>
            <person name="Jiang J."/>
            <person name="Li J."/>
            <person name="Hong G."/>
            <person name="Xue Y."/>
            <person name="Han B."/>
        </authorList>
    </citation>
    <scope>NUCLEOTIDE SEQUENCE [LARGE SCALE GENOMIC DNA]</scope>
    <source>
        <strain>cv. Nipponbare</strain>
    </source>
</reference>
<reference key="2">
    <citation type="journal article" date="2005" name="Nature">
        <title>The map-based sequence of the rice genome.</title>
        <authorList>
            <consortium name="International rice genome sequencing project (IRGSP)"/>
        </authorList>
    </citation>
    <scope>NUCLEOTIDE SEQUENCE [LARGE SCALE GENOMIC DNA]</scope>
    <source>
        <strain>cv. Nipponbare</strain>
    </source>
</reference>
<reference key="3">
    <citation type="journal article" date="2008" name="Nucleic Acids Res.">
        <title>The rice annotation project database (RAP-DB): 2008 update.</title>
        <authorList>
            <consortium name="The rice annotation project (RAP)"/>
        </authorList>
    </citation>
    <scope>GENOME REANNOTATION</scope>
    <source>
        <strain>cv. Nipponbare</strain>
    </source>
</reference>
<reference key="4">
    <citation type="journal article" date="2013" name="Rice">
        <title>Improvement of the Oryza sativa Nipponbare reference genome using next generation sequence and optical map data.</title>
        <authorList>
            <person name="Kawahara Y."/>
            <person name="de la Bastide M."/>
            <person name="Hamilton J.P."/>
            <person name="Kanamori H."/>
            <person name="McCombie W.R."/>
            <person name="Ouyang S."/>
            <person name="Schwartz D.C."/>
            <person name="Tanaka T."/>
            <person name="Wu J."/>
            <person name="Zhou S."/>
            <person name="Childs K.L."/>
            <person name="Davidson R.M."/>
            <person name="Lin H."/>
            <person name="Quesada-Ocampo L."/>
            <person name="Vaillancourt B."/>
            <person name="Sakai H."/>
            <person name="Lee S.S."/>
            <person name="Kim J."/>
            <person name="Numa H."/>
            <person name="Itoh T."/>
            <person name="Buell C.R."/>
            <person name="Matsumoto T."/>
        </authorList>
    </citation>
    <scope>GENOME REANNOTATION</scope>
    <source>
        <strain>cv. Nipponbare</strain>
    </source>
</reference>
<reference key="5">
    <citation type="journal article" date="2003" name="Science">
        <title>Collection, mapping, and annotation of over 28,000 cDNA clones from japonica rice.</title>
        <authorList>
            <consortium name="The rice full-length cDNA consortium"/>
        </authorList>
    </citation>
    <scope>NUCLEOTIDE SEQUENCE [LARGE SCALE MRNA] OF 24-212</scope>
    <source>
        <strain>cv. Nipponbare</strain>
    </source>
</reference>
<organism>
    <name type="scientific">Oryza sativa subsp. japonica</name>
    <name type="common">Rice</name>
    <dbReference type="NCBI Taxonomy" id="39947"/>
    <lineage>
        <taxon>Eukaryota</taxon>
        <taxon>Viridiplantae</taxon>
        <taxon>Streptophyta</taxon>
        <taxon>Embryophyta</taxon>
        <taxon>Tracheophyta</taxon>
        <taxon>Spermatophyta</taxon>
        <taxon>Magnoliopsida</taxon>
        <taxon>Liliopsida</taxon>
        <taxon>Poales</taxon>
        <taxon>Poaceae</taxon>
        <taxon>BOP clade</taxon>
        <taxon>Oryzoideae</taxon>
        <taxon>Oryzeae</taxon>
        <taxon>Oryzinae</taxon>
        <taxon>Oryza</taxon>
        <taxon>Oryza sativa</taxon>
    </lineage>
</organism>
<name>Y4869_ORYSJ</name>
<sequence>MRAATALPSIPSSSSPSPMASDPTELRCSSPESSGDAGAEDPAAVDAAEESGGEGGSGHIAAGTEAAPPRPPEPEPEKVARHGVLPLLGKPYFTCIMCKSHVQPPFQVVVPRSFAPLLPSRTTPATLSWRGRSWGMRFTGGRLIQRLEAGWRGFAVDNDLRLGDGCVFELLVGGGGEQERVEFRVQVLRAEIPARIRGRAGGYTSATPIVID</sequence>
<gene>
    <name type="ordered locus">Os04g0386900</name>
    <name type="ordered locus">LOC_Os04g31730</name>
    <name type="ORF">OSJNBa0044M19.12</name>
</gene>
<feature type="chain" id="PRO_0000376968" description="B3 domain-containing protein Os04g0386900">
    <location>
        <begin position="1"/>
        <end position="212"/>
    </location>
</feature>
<feature type="DNA-binding region" description="TF-B3" evidence="1">
    <location>
        <begin position="93"/>
        <end position="191"/>
    </location>
</feature>
<feature type="region of interest" description="Disordered" evidence="2">
    <location>
        <begin position="1"/>
        <end position="78"/>
    </location>
</feature>
<feature type="compositionally biased region" description="Low complexity" evidence="2">
    <location>
        <begin position="8"/>
        <end position="23"/>
    </location>
</feature>
<feature type="compositionally biased region" description="Low complexity" evidence="2">
    <location>
        <begin position="36"/>
        <end position="46"/>
    </location>
</feature>
<protein>
    <recommendedName>
        <fullName>B3 domain-containing protein Os04g0386900</fullName>
    </recommendedName>
</protein>
<comment type="subcellular location">
    <subcellularLocation>
        <location evidence="1">Nucleus</location>
    </subcellularLocation>
</comment>
<comment type="sequence caution" evidence="3">
    <conflict type="erroneous initiation">
        <sequence resource="EMBL-CDS" id="BAF14538"/>
    </conflict>
</comment>
<comment type="sequence caution" evidence="3">
    <conflict type="erroneous initiation">
        <sequence resource="EMBL-CDS" id="CAE05025"/>
    </conflict>
</comment>
<keyword id="KW-0238">DNA-binding</keyword>
<keyword id="KW-0539">Nucleus</keyword>
<keyword id="KW-1185">Reference proteome</keyword>
<keyword id="KW-0804">Transcription</keyword>
<keyword id="KW-0805">Transcription regulation</keyword>